<keyword id="KW-0963">Cytoplasm</keyword>
<keyword id="KW-0251">Elongation factor</keyword>
<keyword id="KW-0342">GTP-binding</keyword>
<keyword id="KW-0378">Hydrolase</keyword>
<keyword id="KW-0460">Magnesium</keyword>
<keyword id="KW-0479">Metal-binding</keyword>
<keyword id="KW-0547">Nucleotide-binding</keyword>
<keyword id="KW-0648">Protein biosynthesis</keyword>
<keyword id="KW-1185">Reference proteome</keyword>
<evidence type="ECO:0000250" key="1"/>
<evidence type="ECO:0000255" key="2">
    <source>
        <dbReference type="HAMAP-Rule" id="MF_00118"/>
    </source>
</evidence>
<accession>Q5GWR8</accession>
<feature type="chain" id="PRO_0000337580" description="Elongation factor Tu">
    <location>
        <begin position="1"/>
        <end position="396"/>
    </location>
</feature>
<feature type="domain" description="tr-type G">
    <location>
        <begin position="10"/>
        <end position="206"/>
    </location>
</feature>
<feature type="region of interest" description="G1" evidence="1">
    <location>
        <begin position="19"/>
        <end position="26"/>
    </location>
</feature>
<feature type="region of interest" description="G2" evidence="1">
    <location>
        <begin position="60"/>
        <end position="64"/>
    </location>
</feature>
<feature type="region of interest" description="G3" evidence="1">
    <location>
        <begin position="81"/>
        <end position="84"/>
    </location>
</feature>
<feature type="region of interest" description="G4" evidence="1">
    <location>
        <begin position="136"/>
        <end position="139"/>
    </location>
</feature>
<feature type="region of interest" description="G5" evidence="1">
    <location>
        <begin position="174"/>
        <end position="176"/>
    </location>
</feature>
<feature type="binding site" evidence="2">
    <location>
        <begin position="19"/>
        <end position="26"/>
    </location>
    <ligand>
        <name>GTP</name>
        <dbReference type="ChEBI" id="CHEBI:37565"/>
    </ligand>
</feature>
<feature type="binding site" evidence="2">
    <location>
        <position position="26"/>
    </location>
    <ligand>
        <name>Mg(2+)</name>
        <dbReference type="ChEBI" id="CHEBI:18420"/>
    </ligand>
</feature>
<feature type="binding site" evidence="2">
    <location>
        <begin position="81"/>
        <end position="85"/>
    </location>
    <ligand>
        <name>GTP</name>
        <dbReference type="ChEBI" id="CHEBI:37565"/>
    </ligand>
</feature>
<feature type="binding site" evidence="2">
    <location>
        <begin position="136"/>
        <end position="139"/>
    </location>
    <ligand>
        <name>GTP</name>
        <dbReference type="ChEBI" id="CHEBI:37565"/>
    </ligand>
</feature>
<protein>
    <recommendedName>
        <fullName evidence="2">Elongation factor Tu</fullName>
        <shortName evidence="2">EF-Tu</shortName>
        <ecNumber evidence="2">3.6.5.3</ecNumber>
    </recommendedName>
</protein>
<organism>
    <name type="scientific">Xanthomonas oryzae pv. oryzae (strain KACC10331 / KXO85)</name>
    <dbReference type="NCBI Taxonomy" id="291331"/>
    <lineage>
        <taxon>Bacteria</taxon>
        <taxon>Pseudomonadati</taxon>
        <taxon>Pseudomonadota</taxon>
        <taxon>Gammaproteobacteria</taxon>
        <taxon>Lysobacterales</taxon>
        <taxon>Lysobacteraceae</taxon>
        <taxon>Xanthomonas</taxon>
    </lineage>
</organism>
<proteinExistence type="inferred from homology"/>
<sequence>MAKAKFERTKPHVNVGTIGHVDHGKTTLTAALTKIGAERFGGEFKAYDAIDAAPEEKARGITISTAHVEYESPSRHYAHVDCPGHADYVKNMITGAAQMDGAILVCSAADGPMPQTREHILLSRQVGVPHIVVFLNKADMVDDAELLELVEMEVRELLSKYDFPGDDTPIIHGSARLALDGDQSEIGVPAILKLVDALDTFIPEPTRDVDRPFLMPVEDVFSISGRGTVVTGRIERGIIKVGDEIEIVGIRATQKTTVTGVEMFRKLLDQGQAGDNAGLLLRGTKRDDVERGQVLCKPGSIKPHTEFEAEVYVLSKDEGGRHTPFFKGYRPQLYFRTTDITGAIDLPEGVEMVMPGDNVKMTVTLINPVAMDEGLRFAIREGGRTVGAGVVSKIIK</sequence>
<comment type="function">
    <text evidence="2">GTP hydrolase that promotes the GTP-dependent binding of aminoacyl-tRNA to the A-site of ribosomes during protein biosynthesis.</text>
</comment>
<comment type="catalytic activity">
    <reaction evidence="2">
        <text>GTP + H2O = GDP + phosphate + H(+)</text>
        <dbReference type="Rhea" id="RHEA:19669"/>
        <dbReference type="ChEBI" id="CHEBI:15377"/>
        <dbReference type="ChEBI" id="CHEBI:15378"/>
        <dbReference type="ChEBI" id="CHEBI:37565"/>
        <dbReference type="ChEBI" id="CHEBI:43474"/>
        <dbReference type="ChEBI" id="CHEBI:58189"/>
        <dbReference type="EC" id="3.6.5.3"/>
    </reaction>
    <physiologicalReaction direction="left-to-right" evidence="2">
        <dbReference type="Rhea" id="RHEA:19670"/>
    </physiologicalReaction>
</comment>
<comment type="subunit">
    <text evidence="2">Monomer.</text>
</comment>
<comment type="subcellular location">
    <subcellularLocation>
        <location evidence="2">Cytoplasm</location>
    </subcellularLocation>
</comment>
<comment type="similarity">
    <text evidence="2">Belongs to the TRAFAC class translation factor GTPase superfamily. Classic translation factor GTPase family. EF-Tu/EF-1A subfamily.</text>
</comment>
<name>EFTU_XANOR</name>
<dbReference type="EC" id="3.6.5.3" evidence="2"/>
<dbReference type="EMBL" id="AE013598">
    <property type="protein sequence ID" value="AAW76841.1"/>
    <property type="molecule type" value="Genomic_DNA"/>
</dbReference>
<dbReference type="EMBL" id="AE013598">
    <property type="protein sequence ID" value="AAW76853.1"/>
    <property type="molecule type" value="Genomic_DNA"/>
</dbReference>
<dbReference type="SMR" id="Q5GWR8"/>
<dbReference type="STRING" id="291331.XOO3587"/>
<dbReference type="KEGG" id="xoo:XOO3587"/>
<dbReference type="KEGG" id="xoo:XOO3599"/>
<dbReference type="HOGENOM" id="CLU_007265_0_0_6"/>
<dbReference type="Proteomes" id="UP000006735">
    <property type="component" value="Chromosome"/>
</dbReference>
<dbReference type="GO" id="GO:0005829">
    <property type="term" value="C:cytosol"/>
    <property type="evidence" value="ECO:0007669"/>
    <property type="project" value="TreeGrafter"/>
</dbReference>
<dbReference type="GO" id="GO:0005525">
    <property type="term" value="F:GTP binding"/>
    <property type="evidence" value="ECO:0007669"/>
    <property type="project" value="UniProtKB-UniRule"/>
</dbReference>
<dbReference type="GO" id="GO:0003924">
    <property type="term" value="F:GTPase activity"/>
    <property type="evidence" value="ECO:0007669"/>
    <property type="project" value="InterPro"/>
</dbReference>
<dbReference type="GO" id="GO:0097216">
    <property type="term" value="F:guanosine tetraphosphate binding"/>
    <property type="evidence" value="ECO:0007669"/>
    <property type="project" value="UniProtKB-ARBA"/>
</dbReference>
<dbReference type="GO" id="GO:0003746">
    <property type="term" value="F:translation elongation factor activity"/>
    <property type="evidence" value="ECO:0007669"/>
    <property type="project" value="UniProtKB-UniRule"/>
</dbReference>
<dbReference type="CDD" id="cd01884">
    <property type="entry name" value="EF_Tu"/>
    <property type="match status" value="1"/>
</dbReference>
<dbReference type="CDD" id="cd03697">
    <property type="entry name" value="EFTU_II"/>
    <property type="match status" value="1"/>
</dbReference>
<dbReference type="CDD" id="cd03707">
    <property type="entry name" value="EFTU_III"/>
    <property type="match status" value="1"/>
</dbReference>
<dbReference type="FunFam" id="2.40.30.10:FF:000001">
    <property type="entry name" value="Elongation factor Tu"/>
    <property type="match status" value="1"/>
</dbReference>
<dbReference type="FunFam" id="3.40.50.300:FF:000003">
    <property type="entry name" value="Elongation factor Tu"/>
    <property type="match status" value="1"/>
</dbReference>
<dbReference type="Gene3D" id="3.40.50.300">
    <property type="entry name" value="P-loop containing nucleotide triphosphate hydrolases"/>
    <property type="match status" value="1"/>
</dbReference>
<dbReference type="Gene3D" id="2.40.30.10">
    <property type="entry name" value="Translation factors"/>
    <property type="match status" value="2"/>
</dbReference>
<dbReference type="HAMAP" id="MF_00118_B">
    <property type="entry name" value="EF_Tu_B"/>
    <property type="match status" value="1"/>
</dbReference>
<dbReference type="InterPro" id="IPR041709">
    <property type="entry name" value="EF-Tu_GTP-bd"/>
</dbReference>
<dbReference type="InterPro" id="IPR050055">
    <property type="entry name" value="EF-Tu_GTPase"/>
</dbReference>
<dbReference type="InterPro" id="IPR004161">
    <property type="entry name" value="EFTu-like_2"/>
</dbReference>
<dbReference type="InterPro" id="IPR033720">
    <property type="entry name" value="EFTU_2"/>
</dbReference>
<dbReference type="InterPro" id="IPR031157">
    <property type="entry name" value="G_TR_CS"/>
</dbReference>
<dbReference type="InterPro" id="IPR027417">
    <property type="entry name" value="P-loop_NTPase"/>
</dbReference>
<dbReference type="InterPro" id="IPR005225">
    <property type="entry name" value="Small_GTP-bd"/>
</dbReference>
<dbReference type="InterPro" id="IPR000795">
    <property type="entry name" value="T_Tr_GTP-bd_dom"/>
</dbReference>
<dbReference type="InterPro" id="IPR009000">
    <property type="entry name" value="Transl_B-barrel_sf"/>
</dbReference>
<dbReference type="InterPro" id="IPR009001">
    <property type="entry name" value="Transl_elong_EF1A/Init_IF2_C"/>
</dbReference>
<dbReference type="InterPro" id="IPR004541">
    <property type="entry name" value="Transl_elong_EFTu/EF1A_bac/org"/>
</dbReference>
<dbReference type="InterPro" id="IPR004160">
    <property type="entry name" value="Transl_elong_EFTu/EF1A_C"/>
</dbReference>
<dbReference type="NCBIfam" id="TIGR00485">
    <property type="entry name" value="EF-Tu"/>
    <property type="match status" value="1"/>
</dbReference>
<dbReference type="NCBIfam" id="NF000766">
    <property type="entry name" value="PRK00049.1"/>
    <property type="match status" value="1"/>
</dbReference>
<dbReference type="NCBIfam" id="NF009372">
    <property type="entry name" value="PRK12735.1"/>
    <property type="match status" value="1"/>
</dbReference>
<dbReference type="NCBIfam" id="NF009373">
    <property type="entry name" value="PRK12736.1"/>
    <property type="match status" value="1"/>
</dbReference>
<dbReference type="NCBIfam" id="TIGR00231">
    <property type="entry name" value="small_GTP"/>
    <property type="match status" value="1"/>
</dbReference>
<dbReference type="PANTHER" id="PTHR43721:SF22">
    <property type="entry name" value="ELONGATION FACTOR TU, MITOCHONDRIAL"/>
    <property type="match status" value="1"/>
</dbReference>
<dbReference type="PANTHER" id="PTHR43721">
    <property type="entry name" value="ELONGATION FACTOR TU-RELATED"/>
    <property type="match status" value="1"/>
</dbReference>
<dbReference type="Pfam" id="PF00009">
    <property type="entry name" value="GTP_EFTU"/>
    <property type="match status" value="1"/>
</dbReference>
<dbReference type="Pfam" id="PF03144">
    <property type="entry name" value="GTP_EFTU_D2"/>
    <property type="match status" value="1"/>
</dbReference>
<dbReference type="Pfam" id="PF03143">
    <property type="entry name" value="GTP_EFTU_D3"/>
    <property type="match status" value="1"/>
</dbReference>
<dbReference type="PRINTS" id="PR00315">
    <property type="entry name" value="ELONGATNFCT"/>
</dbReference>
<dbReference type="SUPFAM" id="SSF50465">
    <property type="entry name" value="EF-Tu/eEF-1alpha/eIF2-gamma C-terminal domain"/>
    <property type="match status" value="1"/>
</dbReference>
<dbReference type="SUPFAM" id="SSF52540">
    <property type="entry name" value="P-loop containing nucleoside triphosphate hydrolases"/>
    <property type="match status" value="1"/>
</dbReference>
<dbReference type="SUPFAM" id="SSF50447">
    <property type="entry name" value="Translation proteins"/>
    <property type="match status" value="1"/>
</dbReference>
<dbReference type="PROSITE" id="PS00301">
    <property type="entry name" value="G_TR_1"/>
    <property type="match status" value="1"/>
</dbReference>
<dbReference type="PROSITE" id="PS51722">
    <property type="entry name" value="G_TR_2"/>
    <property type="match status" value="1"/>
</dbReference>
<gene>
    <name evidence="2" type="primary">tuf1</name>
    <name type="synonym">tufB</name>
    <name type="ordered locus">XOO3587</name>
</gene>
<gene>
    <name evidence="2" type="primary">tuf2</name>
    <name type="synonym">tufB</name>
    <name type="ordered locus">XOO3599</name>
</gene>
<reference key="1">
    <citation type="journal article" date="2005" name="Nucleic Acids Res.">
        <title>The genome sequence of Xanthomonas oryzae pathovar oryzae KACC10331, the bacterial blight pathogen of rice.</title>
        <authorList>
            <person name="Lee B.-M."/>
            <person name="Park Y.-J."/>
            <person name="Park D.-S."/>
            <person name="Kang H.-W."/>
            <person name="Kim J.-G."/>
            <person name="Song E.-S."/>
            <person name="Park I.-C."/>
            <person name="Yoon U.-H."/>
            <person name="Hahn J.-H."/>
            <person name="Koo B.-S."/>
            <person name="Lee G.-B."/>
            <person name="Kim H."/>
            <person name="Park H.-S."/>
            <person name="Yoon K.-O."/>
            <person name="Kim J.-H."/>
            <person name="Jung C.-H."/>
            <person name="Koh N.-H."/>
            <person name="Seo J.-S."/>
            <person name="Go S.-J."/>
        </authorList>
    </citation>
    <scope>NUCLEOTIDE SEQUENCE [LARGE SCALE GENOMIC DNA]</scope>
    <source>
        <strain>KACC10331 / KXO85</strain>
    </source>
</reference>